<protein>
    <recommendedName>
        <fullName>Pentatricopeptide repeat-containing protein At3g12770</fullName>
    </recommendedName>
</protein>
<reference key="1">
    <citation type="journal article" date="2000" name="DNA Res.">
        <title>Structural analysis of Arabidopsis thaliana chromosome 3. I. Sequence features of the regions of 4,504,864 bp covered by sixty P1 and TAC clones.</title>
        <authorList>
            <person name="Sato S."/>
            <person name="Nakamura Y."/>
            <person name="Kaneko T."/>
            <person name="Katoh T."/>
            <person name="Asamizu E."/>
            <person name="Tabata S."/>
        </authorList>
    </citation>
    <scope>NUCLEOTIDE SEQUENCE [LARGE SCALE GENOMIC DNA]</scope>
    <source>
        <strain>cv. Columbia</strain>
    </source>
</reference>
<reference key="2">
    <citation type="journal article" date="2017" name="Plant J.">
        <title>Araport11: a complete reannotation of the Arabidopsis thaliana reference genome.</title>
        <authorList>
            <person name="Cheng C.Y."/>
            <person name="Krishnakumar V."/>
            <person name="Chan A.P."/>
            <person name="Thibaud-Nissen F."/>
            <person name="Schobel S."/>
            <person name="Town C.D."/>
        </authorList>
    </citation>
    <scope>GENOME REANNOTATION</scope>
    <source>
        <strain>cv. Columbia</strain>
    </source>
</reference>
<reference key="3">
    <citation type="submission" date="2005-03" db="EMBL/GenBank/DDBJ databases">
        <title>Large-scale analysis of RIKEN Arabidopsis full-length (RAFL) cDNAs.</title>
        <authorList>
            <person name="Totoki Y."/>
            <person name="Seki M."/>
            <person name="Ishida J."/>
            <person name="Nakajima M."/>
            <person name="Enju A."/>
            <person name="Kamiya A."/>
            <person name="Narusaka M."/>
            <person name="Shin-i T."/>
            <person name="Nakagawa M."/>
            <person name="Sakamoto N."/>
            <person name="Oishi K."/>
            <person name="Kohara Y."/>
            <person name="Kobayashi M."/>
            <person name="Toyoda A."/>
            <person name="Sakaki Y."/>
            <person name="Sakurai T."/>
            <person name="Iida K."/>
            <person name="Akiyama K."/>
            <person name="Satou M."/>
            <person name="Toyoda T."/>
            <person name="Konagaya A."/>
            <person name="Carninci P."/>
            <person name="Kawai J."/>
            <person name="Hayashizaki Y."/>
            <person name="Shinozaki K."/>
        </authorList>
    </citation>
    <scope>NUCLEOTIDE SEQUENCE [LARGE SCALE MRNA]</scope>
    <source>
        <strain>cv. Columbia</strain>
    </source>
</reference>
<reference key="4">
    <citation type="journal article" date="2000" name="Plant Mol. Biol.">
        <title>In Arabidopsis thaliana, 1% of the genome codes for a novel protein family unique to plants.</title>
        <authorList>
            <person name="Aubourg S."/>
            <person name="Boudet N."/>
            <person name="Kreis M."/>
            <person name="Lecharny A."/>
        </authorList>
    </citation>
    <scope>GENE FAMILY</scope>
</reference>
<reference key="5">
    <citation type="journal article" date="2004" name="Plant Cell">
        <title>Genome-wide analysis of Arabidopsis pentatricopeptide repeat proteins reveals their essential role in organelle biogenesis.</title>
        <authorList>
            <person name="Lurin C."/>
            <person name="Andres C."/>
            <person name="Aubourg S."/>
            <person name="Bellaoui M."/>
            <person name="Bitton F."/>
            <person name="Bruyere C."/>
            <person name="Caboche M."/>
            <person name="Debast C."/>
            <person name="Gualberto J."/>
            <person name="Hoffmann B."/>
            <person name="Lecharny A."/>
            <person name="Le Ret M."/>
            <person name="Martin-Magniette M.-L."/>
            <person name="Mireau H."/>
            <person name="Peeters N."/>
            <person name="Renou J.-P."/>
            <person name="Szurek B."/>
            <person name="Taconnat L."/>
            <person name="Small I."/>
        </authorList>
    </citation>
    <scope>GENE FAMILY</scope>
</reference>
<keyword id="KW-1185">Reference proteome</keyword>
<keyword id="KW-0677">Repeat</keyword>
<evidence type="ECO:0000305" key="1"/>
<feature type="chain" id="PRO_0000356083" description="Pentatricopeptide repeat-containing protein At3g12770">
    <location>
        <begin position="1"/>
        <end position="694"/>
    </location>
</feature>
<feature type="repeat" description="PPR 1">
    <location>
        <begin position="52"/>
        <end position="82"/>
    </location>
</feature>
<feature type="repeat" description="PPR 2">
    <location>
        <begin position="83"/>
        <end position="117"/>
    </location>
</feature>
<feature type="repeat" description="PPR 3">
    <location>
        <begin position="118"/>
        <end position="152"/>
    </location>
</feature>
<feature type="repeat" description="PPR 4">
    <location>
        <begin position="153"/>
        <end position="183"/>
    </location>
</feature>
<feature type="repeat" description="PPR 5">
    <location>
        <begin position="186"/>
        <end position="220"/>
    </location>
</feature>
<feature type="repeat" description="PPR 6">
    <location>
        <begin position="221"/>
        <end position="255"/>
    </location>
</feature>
<feature type="repeat" description="PPR 7">
    <location>
        <begin position="256"/>
        <end position="286"/>
    </location>
</feature>
<feature type="repeat" description="PPR 8">
    <location>
        <begin position="287"/>
        <end position="321"/>
    </location>
</feature>
<feature type="repeat" description="PPR 9">
    <location>
        <begin position="322"/>
        <end position="356"/>
    </location>
</feature>
<feature type="repeat" description="PPR 10">
    <location>
        <begin position="357"/>
        <end position="387"/>
    </location>
</feature>
<feature type="repeat" description="PPR 11">
    <location>
        <begin position="388"/>
        <end position="422"/>
    </location>
</feature>
<feature type="repeat" description="PPR 12">
    <location>
        <begin position="423"/>
        <end position="457"/>
    </location>
</feature>
<feature type="repeat" description="PPR 13">
    <location>
        <begin position="458"/>
        <end position="488"/>
    </location>
</feature>
<feature type="region of interest" description="Type E motif">
    <location>
        <begin position="493"/>
        <end position="568"/>
    </location>
</feature>
<feature type="region of interest" description="Type E(+) motif">
    <location>
        <begin position="569"/>
        <end position="599"/>
    </location>
</feature>
<feature type="region of interest" description="Type DYW motif">
    <location>
        <begin position="600"/>
        <end position="694"/>
    </location>
</feature>
<feature type="sequence conflict" description="In Ref. 3; BAD94552." evidence="1" ref="3">
    <original>Q</original>
    <variation>H</variation>
    <location>
        <position position="212"/>
    </location>
</feature>
<feature type="sequence conflict" description="In Ref. 3; BAD94552." evidence="1" ref="3">
    <original>R</original>
    <variation>L</variation>
    <location>
        <position position="449"/>
    </location>
</feature>
<gene>
    <name type="primary">PCMP-H43</name>
    <name type="ordered locus">At3g12770</name>
    <name type="ORF">MBK21.13</name>
</gene>
<proteinExistence type="evidence at transcript level"/>
<comment type="similarity">
    <text evidence="1">Belongs to the PPR family. PCMP-H subfamily.</text>
</comment>
<comment type="online information" name="Pentatricopeptide repeat proteins">
    <link uri="https://ppr.plantenergy.uwa.edu.au"/>
</comment>
<name>PP224_ARATH</name>
<dbReference type="EMBL" id="AB024033">
    <property type="protein sequence ID" value="BAB02421.1"/>
    <property type="molecule type" value="Genomic_DNA"/>
</dbReference>
<dbReference type="EMBL" id="CP002686">
    <property type="protein sequence ID" value="AEE75244.1"/>
    <property type="molecule type" value="Genomic_DNA"/>
</dbReference>
<dbReference type="EMBL" id="AK221461">
    <property type="protein sequence ID" value="BAD94552.1"/>
    <property type="molecule type" value="mRNA"/>
</dbReference>
<dbReference type="SMR" id="Q9LTV8"/>
<dbReference type="FunCoup" id="Q9LTV8">
    <property type="interactions" value="29"/>
</dbReference>
<dbReference type="IntAct" id="Q9LTV8">
    <property type="interactions" value="1"/>
</dbReference>
<dbReference type="STRING" id="3702.Q9LTV8"/>
<dbReference type="iPTMnet" id="Q9LTV8"/>
<dbReference type="PaxDb" id="3702-AT3G12770.1"/>
<dbReference type="ProteomicsDB" id="249173"/>
<dbReference type="EnsemblPlants" id="AT3G12770.1">
    <property type="protein sequence ID" value="AT3G12770.1"/>
    <property type="gene ID" value="AT3G12770"/>
</dbReference>
<dbReference type="Gramene" id="AT3G12770.1">
    <property type="protein sequence ID" value="AT3G12770.1"/>
    <property type="gene ID" value="AT3G12770"/>
</dbReference>
<dbReference type="KEGG" id="ath:AT3G12770"/>
<dbReference type="Araport" id="AT3G12770"/>
<dbReference type="TAIR" id="AT3G12770">
    <property type="gene designation" value="MEF22"/>
</dbReference>
<dbReference type="eggNOG" id="KOG4197">
    <property type="taxonomic scope" value="Eukaryota"/>
</dbReference>
<dbReference type="HOGENOM" id="CLU_002706_37_8_1"/>
<dbReference type="InParanoid" id="Q9LTV8"/>
<dbReference type="OMA" id="QAGVCPN"/>
<dbReference type="OrthoDB" id="185373at2759"/>
<dbReference type="PhylomeDB" id="Q9LTV8"/>
<dbReference type="PRO" id="PR:Q9LTV8"/>
<dbReference type="Proteomes" id="UP000006548">
    <property type="component" value="Chromosome 3"/>
</dbReference>
<dbReference type="ExpressionAtlas" id="Q9LTV8">
    <property type="expression patterns" value="baseline and differential"/>
</dbReference>
<dbReference type="GO" id="GO:0005739">
    <property type="term" value="C:mitochondrion"/>
    <property type="evidence" value="ECO:0007669"/>
    <property type="project" value="GOC"/>
</dbReference>
<dbReference type="GO" id="GO:0003723">
    <property type="term" value="F:RNA binding"/>
    <property type="evidence" value="ECO:0007669"/>
    <property type="project" value="InterPro"/>
</dbReference>
<dbReference type="GO" id="GO:0008270">
    <property type="term" value="F:zinc ion binding"/>
    <property type="evidence" value="ECO:0007669"/>
    <property type="project" value="InterPro"/>
</dbReference>
<dbReference type="GO" id="GO:0080156">
    <property type="term" value="P:mitochondrial mRNA modification"/>
    <property type="evidence" value="ECO:0000315"/>
    <property type="project" value="TAIR"/>
</dbReference>
<dbReference type="FunFam" id="1.25.40.10:FF:000840">
    <property type="entry name" value="Pentatricopeptide repeat-containing protein At3g12770"/>
    <property type="match status" value="1"/>
</dbReference>
<dbReference type="FunFam" id="1.25.40.10:FF:000090">
    <property type="entry name" value="Pentatricopeptide repeat-containing protein, chloroplastic"/>
    <property type="match status" value="1"/>
</dbReference>
<dbReference type="FunFam" id="1.25.40.10:FF:000309">
    <property type="entry name" value="Pentatricopeptide repeat-containing protein, chloroplastic"/>
    <property type="match status" value="1"/>
</dbReference>
<dbReference type="FunFam" id="1.25.40.10:FF:000409">
    <property type="entry name" value="Pentatricopeptide repeat-containing protein, chloroplastic"/>
    <property type="match status" value="1"/>
</dbReference>
<dbReference type="Gene3D" id="1.25.40.10">
    <property type="entry name" value="Tetratricopeptide repeat domain"/>
    <property type="match status" value="4"/>
</dbReference>
<dbReference type="InterPro" id="IPR032867">
    <property type="entry name" value="DYW_dom"/>
</dbReference>
<dbReference type="InterPro" id="IPR046848">
    <property type="entry name" value="E_motif"/>
</dbReference>
<dbReference type="InterPro" id="IPR002885">
    <property type="entry name" value="Pentatricopeptide_rpt"/>
</dbReference>
<dbReference type="InterPro" id="IPR046960">
    <property type="entry name" value="PPR_At4g14850-like_plant"/>
</dbReference>
<dbReference type="InterPro" id="IPR011990">
    <property type="entry name" value="TPR-like_helical_dom_sf"/>
</dbReference>
<dbReference type="NCBIfam" id="TIGR00756">
    <property type="entry name" value="PPR"/>
    <property type="match status" value="4"/>
</dbReference>
<dbReference type="PANTHER" id="PTHR47926">
    <property type="entry name" value="PENTATRICOPEPTIDE REPEAT-CONTAINING PROTEIN"/>
    <property type="match status" value="1"/>
</dbReference>
<dbReference type="PANTHER" id="PTHR47926:SF396">
    <property type="entry name" value="PENTATRICOPEPTIDE REPEAT-CONTAINING PROTEIN"/>
    <property type="match status" value="1"/>
</dbReference>
<dbReference type="Pfam" id="PF14432">
    <property type="entry name" value="DYW_deaminase"/>
    <property type="match status" value="1"/>
</dbReference>
<dbReference type="Pfam" id="PF20431">
    <property type="entry name" value="E_motif"/>
    <property type="match status" value="1"/>
</dbReference>
<dbReference type="Pfam" id="PF01535">
    <property type="entry name" value="PPR"/>
    <property type="match status" value="2"/>
</dbReference>
<dbReference type="Pfam" id="PF13041">
    <property type="entry name" value="PPR_2"/>
    <property type="match status" value="4"/>
</dbReference>
<dbReference type="SUPFAM" id="SSF48452">
    <property type="entry name" value="TPR-like"/>
    <property type="match status" value="1"/>
</dbReference>
<dbReference type="PROSITE" id="PS51375">
    <property type="entry name" value="PPR"/>
    <property type="match status" value="13"/>
</dbReference>
<sequence length="694" mass="77936">MSEASCLASPLLYTNSGIHSDSFYASLIDSATHKAQLKQIHARLLVLGLQFSGFLITKLIHASSSFGDITFARQVFDDLPRPQIFPWNAIIRGYSRNNHFQDALLMYSNMQLARVSPDSFTFPHLLKACSGLSHLQMGRFVHAQVFRLGFDADVFVQNGLIALYAKCRRLGSARTVFEGLPLPERTIVSWTAIVSAYAQNGEPMEALEIFSQMRKMDVKPDWVALVSVLNAFTCLQDLKQGRSIHASVVKMGLEIEPDLLISLNTMYAKCGQVATAKILFDKMKSPNLILWNAMISGYAKNGYAREAIDMFHEMINKDVRPDTISITSAISACAQVGSLEQARSMYEYVGRSDYRDDVFISSALIDMFAKCGSVEGARLVFDRTLDRDVVVWSAMIVGYGLHGRAREAISLYRAMERGGVHPNDVTFLGLLMACNHSGMVREGWWFFNRMADHKINPQQQHYACVIDLLGRAGHLDQAYEVIKCMPVQPGVTVWGALLSACKKHRHVELGEYAAQQLFSIDPSNTGHYVQLSNLYAAARLWDRVAEVRVRMKEKGLNKDVGCSWVEVRGRLEAFRVGDKSHPRYEEIERQVEWIESRLKEGGFVANKDASLHDLNDEEAEETLCSHSERIAIAYGLISTPQGTPLRITKNLRACVNCHAATKLISKLVDREIVVRDTNRFHHFKDGVCSCGDYW</sequence>
<organism>
    <name type="scientific">Arabidopsis thaliana</name>
    <name type="common">Mouse-ear cress</name>
    <dbReference type="NCBI Taxonomy" id="3702"/>
    <lineage>
        <taxon>Eukaryota</taxon>
        <taxon>Viridiplantae</taxon>
        <taxon>Streptophyta</taxon>
        <taxon>Embryophyta</taxon>
        <taxon>Tracheophyta</taxon>
        <taxon>Spermatophyta</taxon>
        <taxon>Magnoliopsida</taxon>
        <taxon>eudicotyledons</taxon>
        <taxon>Gunneridae</taxon>
        <taxon>Pentapetalae</taxon>
        <taxon>rosids</taxon>
        <taxon>malvids</taxon>
        <taxon>Brassicales</taxon>
        <taxon>Brassicaceae</taxon>
        <taxon>Camelineae</taxon>
        <taxon>Arabidopsis</taxon>
    </lineage>
</organism>
<accession>Q9LTV8</accession>
<accession>Q56Y62</accession>